<feature type="chain" id="PRO_0000094673" description="Holliday junction branch migration complex subunit RuvA">
    <location>
        <begin position="1"/>
        <end position="199"/>
    </location>
</feature>
<feature type="region of interest" description="Domain I" evidence="1">
    <location>
        <begin position="1"/>
        <end position="63"/>
    </location>
</feature>
<feature type="region of interest" description="Domain II" evidence="1">
    <location>
        <begin position="64"/>
        <end position="141"/>
    </location>
</feature>
<feature type="region of interest" description="Flexible linker" evidence="1">
    <location>
        <begin position="141"/>
        <end position="145"/>
    </location>
</feature>
<feature type="region of interest" description="Domain III" evidence="1">
    <location>
        <begin position="146"/>
        <end position="199"/>
    </location>
</feature>
<dbReference type="EMBL" id="AJ235271">
    <property type="protein sequence ID" value="CAA14842.1"/>
    <property type="molecule type" value="Genomic_DNA"/>
</dbReference>
<dbReference type="PIR" id="H71695">
    <property type="entry name" value="H71695"/>
</dbReference>
<dbReference type="RefSeq" id="NP_220766.1">
    <property type="nucleotide sequence ID" value="NC_000963.1"/>
</dbReference>
<dbReference type="RefSeq" id="WP_004597563.1">
    <property type="nucleotide sequence ID" value="NC_000963.1"/>
</dbReference>
<dbReference type="SMR" id="Q9ZDE6"/>
<dbReference type="STRING" id="272947.gene:17555465"/>
<dbReference type="EnsemblBacteria" id="CAA14842">
    <property type="protein sequence ID" value="CAA14842"/>
    <property type="gene ID" value="CAA14842"/>
</dbReference>
<dbReference type="GeneID" id="57569510"/>
<dbReference type="KEGG" id="rpr:RP385"/>
<dbReference type="PATRIC" id="fig|272947.5.peg.396"/>
<dbReference type="eggNOG" id="COG0632">
    <property type="taxonomic scope" value="Bacteria"/>
</dbReference>
<dbReference type="HOGENOM" id="CLU_087936_3_0_5"/>
<dbReference type="OrthoDB" id="5293449at2"/>
<dbReference type="Proteomes" id="UP000002480">
    <property type="component" value="Chromosome"/>
</dbReference>
<dbReference type="GO" id="GO:0005737">
    <property type="term" value="C:cytoplasm"/>
    <property type="evidence" value="ECO:0007669"/>
    <property type="project" value="UniProtKB-SubCell"/>
</dbReference>
<dbReference type="GO" id="GO:0009379">
    <property type="term" value="C:Holliday junction helicase complex"/>
    <property type="evidence" value="ECO:0007669"/>
    <property type="project" value="InterPro"/>
</dbReference>
<dbReference type="GO" id="GO:0048476">
    <property type="term" value="C:Holliday junction resolvase complex"/>
    <property type="evidence" value="ECO:0007669"/>
    <property type="project" value="UniProtKB-UniRule"/>
</dbReference>
<dbReference type="GO" id="GO:0005524">
    <property type="term" value="F:ATP binding"/>
    <property type="evidence" value="ECO:0007669"/>
    <property type="project" value="InterPro"/>
</dbReference>
<dbReference type="GO" id="GO:0000400">
    <property type="term" value="F:four-way junction DNA binding"/>
    <property type="evidence" value="ECO:0007669"/>
    <property type="project" value="UniProtKB-UniRule"/>
</dbReference>
<dbReference type="GO" id="GO:0009378">
    <property type="term" value="F:four-way junction helicase activity"/>
    <property type="evidence" value="ECO:0007669"/>
    <property type="project" value="InterPro"/>
</dbReference>
<dbReference type="GO" id="GO:0006310">
    <property type="term" value="P:DNA recombination"/>
    <property type="evidence" value="ECO:0007669"/>
    <property type="project" value="UniProtKB-UniRule"/>
</dbReference>
<dbReference type="GO" id="GO:0006281">
    <property type="term" value="P:DNA repair"/>
    <property type="evidence" value="ECO:0007669"/>
    <property type="project" value="UniProtKB-UniRule"/>
</dbReference>
<dbReference type="CDD" id="cd14332">
    <property type="entry name" value="UBA_RuvA_C"/>
    <property type="match status" value="1"/>
</dbReference>
<dbReference type="Gene3D" id="1.10.150.20">
    <property type="entry name" value="5' to 3' exonuclease, C-terminal subdomain"/>
    <property type="match status" value="1"/>
</dbReference>
<dbReference type="Gene3D" id="1.10.8.10">
    <property type="entry name" value="DNA helicase RuvA subunit, C-terminal domain"/>
    <property type="match status" value="1"/>
</dbReference>
<dbReference type="Gene3D" id="2.40.50.140">
    <property type="entry name" value="Nucleic acid-binding proteins"/>
    <property type="match status" value="1"/>
</dbReference>
<dbReference type="HAMAP" id="MF_00031">
    <property type="entry name" value="DNA_HJ_migration_RuvA"/>
    <property type="match status" value="1"/>
</dbReference>
<dbReference type="InterPro" id="IPR013849">
    <property type="entry name" value="DNA_helicase_Holl-junc_RuvA_I"/>
</dbReference>
<dbReference type="InterPro" id="IPR003583">
    <property type="entry name" value="Hlx-hairpin-Hlx_DNA-bd_motif"/>
</dbReference>
<dbReference type="InterPro" id="IPR012340">
    <property type="entry name" value="NA-bd_OB-fold"/>
</dbReference>
<dbReference type="InterPro" id="IPR000085">
    <property type="entry name" value="RuvA"/>
</dbReference>
<dbReference type="InterPro" id="IPR010994">
    <property type="entry name" value="RuvA_2-like"/>
</dbReference>
<dbReference type="InterPro" id="IPR011114">
    <property type="entry name" value="RuvA_C"/>
</dbReference>
<dbReference type="InterPro" id="IPR036267">
    <property type="entry name" value="RuvA_C_sf"/>
</dbReference>
<dbReference type="NCBIfam" id="TIGR00084">
    <property type="entry name" value="ruvA"/>
    <property type="match status" value="1"/>
</dbReference>
<dbReference type="Pfam" id="PF14520">
    <property type="entry name" value="HHH_5"/>
    <property type="match status" value="1"/>
</dbReference>
<dbReference type="Pfam" id="PF07499">
    <property type="entry name" value="RuvA_C"/>
    <property type="match status" value="1"/>
</dbReference>
<dbReference type="Pfam" id="PF01330">
    <property type="entry name" value="RuvA_N"/>
    <property type="match status" value="1"/>
</dbReference>
<dbReference type="SMART" id="SM00278">
    <property type="entry name" value="HhH1"/>
    <property type="match status" value="2"/>
</dbReference>
<dbReference type="SUPFAM" id="SSF46929">
    <property type="entry name" value="DNA helicase RuvA subunit, C-terminal domain"/>
    <property type="match status" value="1"/>
</dbReference>
<dbReference type="SUPFAM" id="SSF50249">
    <property type="entry name" value="Nucleic acid-binding proteins"/>
    <property type="match status" value="1"/>
</dbReference>
<dbReference type="SUPFAM" id="SSF47781">
    <property type="entry name" value="RuvA domain 2-like"/>
    <property type="match status" value="1"/>
</dbReference>
<proteinExistence type="inferred from homology"/>
<comment type="function">
    <text evidence="1">The RuvA-RuvB-RuvC complex processes Holliday junction (HJ) DNA during genetic recombination and DNA repair, while the RuvA-RuvB complex plays an important role in the rescue of blocked DNA replication forks via replication fork reversal (RFR). RuvA specifically binds to HJ cruciform DNA, conferring on it an open structure. The RuvB hexamer acts as an ATP-dependent pump, pulling dsDNA into and through the RuvAB complex. HJ branch migration allows RuvC to scan DNA until it finds its consensus sequence, where it cleaves and resolves the cruciform DNA.</text>
</comment>
<comment type="subunit">
    <text evidence="1">Homotetramer. Forms an RuvA(8)-RuvB(12)-Holliday junction (HJ) complex. HJ DNA is sandwiched between 2 RuvA tetramers; dsDNA enters through RuvA and exits via RuvB. An RuvB hexamer assembles on each DNA strand where it exits the tetramer. Each RuvB hexamer is contacted by two RuvA subunits (via domain III) on 2 adjacent RuvB subunits; this complex drives branch migration. In the full resolvosome a probable DNA-RuvA(4)-RuvB(12)-RuvC(2) complex forms which resolves the HJ.</text>
</comment>
<comment type="subcellular location">
    <subcellularLocation>
        <location evidence="1">Cytoplasm</location>
    </subcellularLocation>
</comment>
<comment type="domain">
    <text evidence="1">Has three domains with a flexible linker between the domains II and III and assumes an 'L' shape. Domain III is highly mobile and contacts RuvB.</text>
</comment>
<comment type="similarity">
    <text evidence="1">Belongs to the RuvA family.</text>
</comment>
<gene>
    <name evidence="1" type="primary">ruvA</name>
    <name type="ordered locus">RP385</name>
</gene>
<accession>Q9ZDE6</accession>
<sequence length="199" mass="22111">MIGKLNGKIDSHCDDYVIIDVNGVGYLVYASGKTLAKLVEGKFYKLFIETHVREEHIHLYGFLTLEEKNFFNLLQSVNGIGTKMALSILSNLTPTDIQIAINNDDRNIFKAISGVGAKLAERIMLELKDKITKIFSSSAIIKDSNISSIAINEVMKALVNLGFTRFEAQNTVQGIITQNPKISIDELIKTALKNRNSSF</sequence>
<reference key="1">
    <citation type="journal article" date="1998" name="Nature">
        <title>The genome sequence of Rickettsia prowazekii and the origin of mitochondria.</title>
        <authorList>
            <person name="Andersson S.G.E."/>
            <person name="Zomorodipour A."/>
            <person name="Andersson J.O."/>
            <person name="Sicheritz-Ponten T."/>
            <person name="Alsmark U.C.M."/>
            <person name="Podowski R.M."/>
            <person name="Naeslund A.K."/>
            <person name="Eriksson A.-S."/>
            <person name="Winkler H.H."/>
            <person name="Kurland C.G."/>
        </authorList>
    </citation>
    <scope>NUCLEOTIDE SEQUENCE [LARGE SCALE GENOMIC DNA]</scope>
    <source>
        <strain>Madrid E</strain>
    </source>
</reference>
<organism>
    <name type="scientific">Rickettsia prowazekii (strain Madrid E)</name>
    <dbReference type="NCBI Taxonomy" id="272947"/>
    <lineage>
        <taxon>Bacteria</taxon>
        <taxon>Pseudomonadati</taxon>
        <taxon>Pseudomonadota</taxon>
        <taxon>Alphaproteobacteria</taxon>
        <taxon>Rickettsiales</taxon>
        <taxon>Rickettsiaceae</taxon>
        <taxon>Rickettsieae</taxon>
        <taxon>Rickettsia</taxon>
        <taxon>typhus group</taxon>
    </lineage>
</organism>
<keyword id="KW-0963">Cytoplasm</keyword>
<keyword id="KW-0227">DNA damage</keyword>
<keyword id="KW-0233">DNA recombination</keyword>
<keyword id="KW-0234">DNA repair</keyword>
<keyword id="KW-0238">DNA-binding</keyword>
<keyword id="KW-1185">Reference proteome</keyword>
<name>RUVA_RICPR</name>
<evidence type="ECO:0000255" key="1">
    <source>
        <dbReference type="HAMAP-Rule" id="MF_00031"/>
    </source>
</evidence>
<protein>
    <recommendedName>
        <fullName evidence="1">Holliday junction branch migration complex subunit RuvA</fullName>
    </recommendedName>
</protein>